<reference key="1">
    <citation type="journal article" date="2009" name="Proc. Natl. Acad. Sci. U.S.A.">
        <title>Biogeography of the Sulfolobus islandicus pan-genome.</title>
        <authorList>
            <person name="Reno M.L."/>
            <person name="Held N.L."/>
            <person name="Fields C.J."/>
            <person name="Burke P.V."/>
            <person name="Whitaker R.J."/>
        </authorList>
    </citation>
    <scope>NUCLEOTIDE SEQUENCE [LARGE SCALE GENOMIC DNA]</scope>
    <source>
        <strain>Y.G.57.14 / Yellowstone #1</strain>
    </source>
</reference>
<dbReference type="EMBL" id="CP001403">
    <property type="protein sequence ID" value="ACP45699.1"/>
    <property type="molecule type" value="Genomic_DNA"/>
</dbReference>
<dbReference type="RefSeq" id="WP_012711435.1">
    <property type="nucleotide sequence ID" value="NC_012622.1"/>
</dbReference>
<dbReference type="SMR" id="C3NEG0"/>
<dbReference type="KEGG" id="siy:YG5714_1432"/>
<dbReference type="HOGENOM" id="CLU_071479_3_0_2"/>
<dbReference type="Proteomes" id="UP000002308">
    <property type="component" value="Chromosome"/>
</dbReference>
<dbReference type="GO" id="GO:0022625">
    <property type="term" value="C:cytosolic large ribosomal subunit"/>
    <property type="evidence" value="ECO:0007669"/>
    <property type="project" value="TreeGrafter"/>
</dbReference>
<dbReference type="GO" id="GO:0003735">
    <property type="term" value="F:structural constituent of ribosome"/>
    <property type="evidence" value="ECO:0007669"/>
    <property type="project" value="InterPro"/>
</dbReference>
<dbReference type="GO" id="GO:0006412">
    <property type="term" value="P:translation"/>
    <property type="evidence" value="ECO:0007669"/>
    <property type="project" value="UniProtKB-UniRule"/>
</dbReference>
<dbReference type="CDD" id="cd00513">
    <property type="entry name" value="Ribosomal_L32_L32e"/>
    <property type="match status" value="1"/>
</dbReference>
<dbReference type="HAMAP" id="MF_00810">
    <property type="entry name" value="Ribosomal_eL32"/>
    <property type="match status" value="1"/>
</dbReference>
<dbReference type="InterPro" id="IPR001515">
    <property type="entry name" value="Ribosomal_eL32"/>
</dbReference>
<dbReference type="InterPro" id="IPR023654">
    <property type="entry name" value="Ribosomal_eL32_arc"/>
</dbReference>
<dbReference type="InterPro" id="IPR018263">
    <property type="entry name" value="Ribosomal_eL32_CS"/>
</dbReference>
<dbReference type="InterPro" id="IPR036351">
    <property type="entry name" value="Ribosomal_eL32_sf"/>
</dbReference>
<dbReference type="NCBIfam" id="NF006332">
    <property type="entry name" value="PRK08562.1"/>
    <property type="match status" value="1"/>
</dbReference>
<dbReference type="PANTHER" id="PTHR23413">
    <property type="entry name" value="60S RIBOSOMAL PROTEIN L32 AND DNA-DIRECTED RNA POLYMERASE II, SUBUNIT N"/>
    <property type="match status" value="1"/>
</dbReference>
<dbReference type="PANTHER" id="PTHR23413:SF1">
    <property type="entry name" value="RIBOSOMAL PROTEIN L32"/>
    <property type="match status" value="1"/>
</dbReference>
<dbReference type="Pfam" id="PF01655">
    <property type="entry name" value="Ribosomal_L32e"/>
    <property type="match status" value="1"/>
</dbReference>
<dbReference type="SMART" id="SM01393">
    <property type="entry name" value="Ribosomal_L32e"/>
    <property type="match status" value="1"/>
</dbReference>
<dbReference type="SUPFAM" id="SSF52042">
    <property type="entry name" value="Ribosomal protein L32e"/>
    <property type="match status" value="1"/>
</dbReference>
<dbReference type="PROSITE" id="PS00580">
    <property type="entry name" value="RIBOSOMAL_L32E"/>
    <property type="match status" value="1"/>
</dbReference>
<accession>C3NEG0</accession>
<evidence type="ECO:0000255" key="1">
    <source>
        <dbReference type="HAMAP-Rule" id="MF_00810"/>
    </source>
</evidence>
<evidence type="ECO:0000305" key="2"/>
<proteinExistence type="inferred from homology"/>
<gene>
    <name evidence="1" type="primary">rpl32e</name>
    <name type="ordered locus">YG5714_1432</name>
</gene>
<organism>
    <name type="scientific">Saccharolobus islandicus (strain Y.G.57.14 / Yellowstone #1)</name>
    <name type="common">Sulfolobus islandicus</name>
    <dbReference type="NCBI Taxonomy" id="439386"/>
    <lineage>
        <taxon>Archaea</taxon>
        <taxon>Thermoproteota</taxon>
        <taxon>Thermoprotei</taxon>
        <taxon>Sulfolobales</taxon>
        <taxon>Sulfolobaceae</taxon>
        <taxon>Saccharolobus</taxon>
    </lineage>
</organism>
<protein>
    <recommendedName>
        <fullName evidence="1">Large ribosomal subunit protein eL32</fullName>
    </recommendedName>
    <alternativeName>
        <fullName evidence="2">50S ribosomal protein L32e</fullName>
    </alternativeName>
</protein>
<sequence length="138" mass="16126">MTEEKIQSYRKKIYVIRQKLKAKKPRFLRYDSDKFFRLGRQEKWRRPYGRDNKTRLKVRGFPAIVSVGYRLPKEVRGFHPSGLRQVIVHNVNDLVKVQNQKDSVIVTIASSVGFKKRLEILNKARELGLKVSNEGVSA</sequence>
<keyword id="KW-0687">Ribonucleoprotein</keyword>
<keyword id="KW-0689">Ribosomal protein</keyword>
<comment type="similarity">
    <text evidence="1">Belongs to the eukaryotic ribosomal protein eL32 family.</text>
</comment>
<feature type="chain" id="PRO_1000213015" description="Large ribosomal subunit protein eL32">
    <location>
        <begin position="1"/>
        <end position="138"/>
    </location>
</feature>
<name>RL32_SACI7</name>